<dbReference type="EC" id="2.7.7.56" evidence="1"/>
<dbReference type="EMBL" id="BX569689">
    <property type="protein sequence ID" value="CAE06791.1"/>
    <property type="molecule type" value="Genomic_DNA"/>
</dbReference>
<dbReference type="RefSeq" id="WP_011127150.1">
    <property type="nucleotide sequence ID" value="NC_005070.1"/>
</dbReference>
<dbReference type="SMR" id="Q7U9I1"/>
<dbReference type="STRING" id="84588.SYNW0276"/>
<dbReference type="KEGG" id="syw:SYNW0276"/>
<dbReference type="eggNOG" id="COG0689">
    <property type="taxonomic scope" value="Bacteria"/>
</dbReference>
<dbReference type="HOGENOM" id="CLU_050858_0_0_3"/>
<dbReference type="Proteomes" id="UP000001422">
    <property type="component" value="Chromosome"/>
</dbReference>
<dbReference type="GO" id="GO:0000175">
    <property type="term" value="F:3'-5'-RNA exonuclease activity"/>
    <property type="evidence" value="ECO:0007669"/>
    <property type="project" value="UniProtKB-UniRule"/>
</dbReference>
<dbReference type="GO" id="GO:0000049">
    <property type="term" value="F:tRNA binding"/>
    <property type="evidence" value="ECO:0007669"/>
    <property type="project" value="UniProtKB-UniRule"/>
</dbReference>
<dbReference type="GO" id="GO:0009022">
    <property type="term" value="F:tRNA nucleotidyltransferase activity"/>
    <property type="evidence" value="ECO:0007669"/>
    <property type="project" value="UniProtKB-UniRule"/>
</dbReference>
<dbReference type="GO" id="GO:0016075">
    <property type="term" value="P:rRNA catabolic process"/>
    <property type="evidence" value="ECO:0007669"/>
    <property type="project" value="UniProtKB-UniRule"/>
</dbReference>
<dbReference type="GO" id="GO:0006364">
    <property type="term" value="P:rRNA processing"/>
    <property type="evidence" value="ECO:0007669"/>
    <property type="project" value="UniProtKB-KW"/>
</dbReference>
<dbReference type="GO" id="GO:0008033">
    <property type="term" value="P:tRNA processing"/>
    <property type="evidence" value="ECO:0007669"/>
    <property type="project" value="UniProtKB-UniRule"/>
</dbReference>
<dbReference type="FunFam" id="3.30.230.70:FF:000003">
    <property type="entry name" value="Ribonuclease PH"/>
    <property type="match status" value="1"/>
</dbReference>
<dbReference type="Gene3D" id="3.30.230.70">
    <property type="entry name" value="GHMP Kinase, N-terminal domain"/>
    <property type="match status" value="1"/>
</dbReference>
<dbReference type="HAMAP" id="MF_00564">
    <property type="entry name" value="RNase_PH"/>
    <property type="match status" value="1"/>
</dbReference>
<dbReference type="InterPro" id="IPR001247">
    <property type="entry name" value="ExoRNase_PH_dom1"/>
</dbReference>
<dbReference type="InterPro" id="IPR015847">
    <property type="entry name" value="ExoRNase_PH_dom2"/>
</dbReference>
<dbReference type="InterPro" id="IPR036345">
    <property type="entry name" value="ExoRNase_PH_dom2_sf"/>
</dbReference>
<dbReference type="InterPro" id="IPR027408">
    <property type="entry name" value="PNPase/RNase_PH_dom_sf"/>
</dbReference>
<dbReference type="InterPro" id="IPR020568">
    <property type="entry name" value="Ribosomal_Su5_D2-typ_SF"/>
</dbReference>
<dbReference type="InterPro" id="IPR050080">
    <property type="entry name" value="RNase_PH"/>
</dbReference>
<dbReference type="InterPro" id="IPR002381">
    <property type="entry name" value="RNase_PH_bac-type"/>
</dbReference>
<dbReference type="InterPro" id="IPR018336">
    <property type="entry name" value="RNase_PH_CS"/>
</dbReference>
<dbReference type="NCBIfam" id="TIGR01966">
    <property type="entry name" value="RNasePH"/>
    <property type="match status" value="1"/>
</dbReference>
<dbReference type="PANTHER" id="PTHR11953">
    <property type="entry name" value="EXOSOME COMPLEX COMPONENT"/>
    <property type="match status" value="1"/>
</dbReference>
<dbReference type="PANTHER" id="PTHR11953:SF0">
    <property type="entry name" value="EXOSOME COMPLEX COMPONENT RRP41"/>
    <property type="match status" value="1"/>
</dbReference>
<dbReference type="Pfam" id="PF01138">
    <property type="entry name" value="RNase_PH"/>
    <property type="match status" value="1"/>
</dbReference>
<dbReference type="Pfam" id="PF03725">
    <property type="entry name" value="RNase_PH_C"/>
    <property type="match status" value="1"/>
</dbReference>
<dbReference type="SUPFAM" id="SSF55666">
    <property type="entry name" value="Ribonuclease PH domain 2-like"/>
    <property type="match status" value="1"/>
</dbReference>
<dbReference type="SUPFAM" id="SSF54211">
    <property type="entry name" value="Ribosomal protein S5 domain 2-like"/>
    <property type="match status" value="1"/>
</dbReference>
<dbReference type="PROSITE" id="PS01277">
    <property type="entry name" value="RIBONUCLEASE_PH"/>
    <property type="match status" value="1"/>
</dbReference>
<organism>
    <name type="scientific">Parasynechococcus marenigrum (strain WH8102)</name>
    <dbReference type="NCBI Taxonomy" id="84588"/>
    <lineage>
        <taxon>Bacteria</taxon>
        <taxon>Bacillati</taxon>
        <taxon>Cyanobacteriota</taxon>
        <taxon>Cyanophyceae</taxon>
        <taxon>Synechococcales</taxon>
        <taxon>Prochlorococcaceae</taxon>
        <taxon>Parasynechococcus</taxon>
        <taxon>Parasynechococcus marenigrum</taxon>
    </lineage>
</organism>
<reference key="1">
    <citation type="journal article" date="2003" name="Nature">
        <title>The genome of a motile marine Synechococcus.</title>
        <authorList>
            <person name="Palenik B."/>
            <person name="Brahamsha B."/>
            <person name="Larimer F.W."/>
            <person name="Land M.L."/>
            <person name="Hauser L."/>
            <person name="Chain P."/>
            <person name="Lamerdin J.E."/>
            <person name="Regala W."/>
            <person name="Allen E.E."/>
            <person name="McCarren J."/>
            <person name="Paulsen I.T."/>
            <person name="Dufresne A."/>
            <person name="Partensky F."/>
            <person name="Webb E.A."/>
            <person name="Waterbury J."/>
        </authorList>
    </citation>
    <scope>NUCLEOTIDE SEQUENCE [LARGE SCALE GENOMIC DNA]</scope>
    <source>
        <strain>WH8102</strain>
    </source>
</reference>
<gene>
    <name evidence="1" type="primary">rph</name>
    <name type="ordered locus">SYNW0276</name>
</gene>
<keyword id="KW-0548">Nucleotidyltransferase</keyword>
<keyword id="KW-0694">RNA-binding</keyword>
<keyword id="KW-0698">rRNA processing</keyword>
<keyword id="KW-0808">Transferase</keyword>
<keyword id="KW-0819">tRNA processing</keyword>
<keyword id="KW-0820">tRNA-binding</keyword>
<evidence type="ECO:0000255" key="1">
    <source>
        <dbReference type="HAMAP-Rule" id="MF_00564"/>
    </source>
</evidence>
<proteinExistence type="inferred from homology"/>
<sequence length="249" mass="26942">MPAPTPKRADGRGATELRPFSVDWDPMSFALSSLIVRTGRTAVLCSVSLEEDVPRWRRGNGCGWLSAEYRLLPGSTPQRQSRELMKLSGRTQEIQRLIGRSLRAVLDMDALGERTLLIDCDVIQADAGTRTASITGAWIALRRACDLLRSQGVLTQDPIRQQLAAVSVGLIDGTPLLDLDYSEDSRADVDLNVVTAGDGRLLELQGTAEQAPFSRSELDAMLNLAESGLQELMQGQRHALATAAGSAIS</sequence>
<comment type="function">
    <text evidence="1">Phosphorolytic 3'-5' exoribonuclease that plays an important role in tRNA 3'-end maturation. Removes nucleotide residues following the 3'-CCA terminus of tRNAs; can also add nucleotides to the ends of RNA molecules by using nucleoside diphosphates as substrates, but this may not be physiologically important. Probably plays a role in initiation of 16S rRNA degradation (leading to ribosome degradation) during starvation.</text>
</comment>
<comment type="catalytic activity">
    <reaction evidence="1">
        <text>tRNA(n+1) + phosphate = tRNA(n) + a ribonucleoside 5'-diphosphate</text>
        <dbReference type="Rhea" id="RHEA:10628"/>
        <dbReference type="Rhea" id="RHEA-COMP:17343"/>
        <dbReference type="Rhea" id="RHEA-COMP:17344"/>
        <dbReference type="ChEBI" id="CHEBI:43474"/>
        <dbReference type="ChEBI" id="CHEBI:57930"/>
        <dbReference type="ChEBI" id="CHEBI:173114"/>
        <dbReference type="EC" id="2.7.7.56"/>
    </reaction>
</comment>
<comment type="subunit">
    <text evidence="1">Homohexameric ring arranged as a trimer of dimers.</text>
</comment>
<comment type="similarity">
    <text evidence="1">Belongs to the RNase PH family.</text>
</comment>
<protein>
    <recommendedName>
        <fullName evidence="1">Ribonuclease PH</fullName>
        <shortName evidence="1">RNase PH</shortName>
        <ecNumber evidence="1">2.7.7.56</ecNumber>
    </recommendedName>
    <alternativeName>
        <fullName evidence="1">tRNA nucleotidyltransferase</fullName>
    </alternativeName>
</protein>
<name>RNPH_PARMW</name>
<accession>Q7U9I1</accession>
<feature type="chain" id="PRO_0000139943" description="Ribonuclease PH">
    <location>
        <begin position="1"/>
        <end position="249"/>
    </location>
</feature>
<feature type="binding site" evidence="1">
    <location>
        <position position="90"/>
    </location>
    <ligand>
        <name>phosphate</name>
        <dbReference type="ChEBI" id="CHEBI:43474"/>
        <note>substrate</note>
    </ligand>
</feature>
<feature type="binding site" evidence="1">
    <location>
        <begin position="128"/>
        <end position="130"/>
    </location>
    <ligand>
        <name>phosphate</name>
        <dbReference type="ChEBI" id="CHEBI:43474"/>
        <note>substrate</note>
    </ligand>
</feature>